<evidence type="ECO:0000250" key="1"/>
<evidence type="ECO:0000255" key="2">
    <source>
        <dbReference type="PROSITE-ProRule" id="PRU00031"/>
    </source>
</evidence>
<evidence type="ECO:0000305" key="3"/>
<sequence>MSSGGLLLLVGLLTLCAELTPVSSKDRPKFCNVPPEPGRCNANVRAFYYNPRLRKCIEFTYGGCGGNANNFKSGGECKRACGE</sequence>
<comment type="function">
    <text evidence="1">Serine protease inhibitor.</text>
</comment>
<comment type="subcellular location">
    <subcellularLocation>
        <location evidence="1">Secreted</location>
    </subcellularLocation>
</comment>
<comment type="tissue specificity">
    <text>Expressed by the venom gland.</text>
</comment>
<comment type="similarity">
    <text evidence="3">Belongs to the venom Kunitz-type family.</text>
</comment>
<comment type="sequence caution" evidence="3">
    <conflict type="erroneous initiation">
        <sequence resource="EMBL-CDS" id="AAL30069"/>
    </conflict>
</comment>
<accession>Q8AY42</accession>
<organism>
    <name type="scientific">Bungarus candidus</name>
    <name type="common">Malayan krait</name>
    <dbReference type="NCBI Taxonomy" id="92438"/>
    <lineage>
        <taxon>Eukaryota</taxon>
        <taxon>Metazoa</taxon>
        <taxon>Chordata</taxon>
        <taxon>Craniata</taxon>
        <taxon>Vertebrata</taxon>
        <taxon>Euteleostomi</taxon>
        <taxon>Lepidosauria</taxon>
        <taxon>Squamata</taxon>
        <taxon>Bifurcata</taxon>
        <taxon>Unidentata</taxon>
        <taxon>Episquamata</taxon>
        <taxon>Toxicofera</taxon>
        <taxon>Serpentes</taxon>
        <taxon>Colubroidea</taxon>
        <taxon>Elapidae</taxon>
        <taxon>Bungarinae</taxon>
        <taxon>Bungarus</taxon>
    </lineage>
</organism>
<keyword id="KW-1015">Disulfide bond</keyword>
<keyword id="KW-0646">Protease inhibitor</keyword>
<keyword id="KW-0964">Secreted</keyword>
<keyword id="KW-0722">Serine protease inhibitor</keyword>
<keyword id="KW-0732">Signal</keyword>
<feature type="signal peptide" evidence="1">
    <location>
        <begin position="1"/>
        <end position="24"/>
    </location>
</feature>
<feature type="chain" id="PRO_0000376872" description="Kunitz-type serine protease inhibitor B">
    <location>
        <begin position="25"/>
        <end position="83"/>
    </location>
</feature>
<feature type="domain" description="BPTI/Kunitz inhibitor" evidence="2">
    <location>
        <begin position="31"/>
        <end position="81"/>
    </location>
</feature>
<feature type="site" description="Reactive bond for chymotrypsin" evidence="1">
    <location>
        <begin position="41"/>
        <end position="42"/>
    </location>
</feature>
<feature type="disulfide bond" evidence="2">
    <location>
        <begin position="31"/>
        <end position="81"/>
    </location>
</feature>
<feature type="disulfide bond" evidence="2">
    <location>
        <begin position="40"/>
        <end position="64"/>
    </location>
</feature>
<feature type="disulfide bond" evidence="2">
    <location>
        <begin position="56"/>
        <end position="77"/>
    </location>
</feature>
<protein>
    <recommendedName>
        <fullName>Kunitz-type serine protease inhibitor B</fullName>
    </recommendedName>
    <alternativeName>
        <fullName>Kunitz inhibitor B</fullName>
    </alternativeName>
</protein>
<name>VKTB_BUNCA</name>
<dbReference type="EMBL" id="AY057887">
    <property type="protein sequence ID" value="AAL30069.1"/>
    <property type="status" value="ALT_INIT"/>
    <property type="molecule type" value="mRNA"/>
</dbReference>
<dbReference type="SMR" id="Q8AY42"/>
<dbReference type="MEROPS" id="I02.031"/>
<dbReference type="GO" id="GO:0005615">
    <property type="term" value="C:extracellular space"/>
    <property type="evidence" value="ECO:0007669"/>
    <property type="project" value="TreeGrafter"/>
</dbReference>
<dbReference type="GO" id="GO:0004867">
    <property type="term" value="F:serine-type endopeptidase inhibitor activity"/>
    <property type="evidence" value="ECO:0007669"/>
    <property type="project" value="UniProtKB-KW"/>
</dbReference>
<dbReference type="CDD" id="cd22594">
    <property type="entry name" value="Kunitz_textilinin-like"/>
    <property type="match status" value="1"/>
</dbReference>
<dbReference type="Gene3D" id="4.10.410.10">
    <property type="entry name" value="Pancreatic trypsin inhibitor Kunitz domain"/>
    <property type="match status" value="1"/>
</dbReference>
<dbReference type="InterPro" id="IPR002223">
    <property type="entry name" value="Kunitz_BPTI"/>
</dbReference>
<dbReference type="InterPro" id="IPR036880">
    <property type="entry name" value="Kunitz_BPTI_sf"/>
</dbReference>
<dbReference type="InterPro" id="IPR020901">
    <property type="entry name" value="Prtase_inh_Kunz-CS"/>
</dbReference>
<dbReference type="InterPro" id="IPR050098">
    <property type="entry name" value="TFPI/VKTCI-like"/>
</dbReference>
<dbReference type="PANTHER" id="PTHR10083:SF374">
    <property type="entry name" value="BPTI_KUNITZ INHIBITOR DOMAIN-CONTAINING PROTEIN"/>
    <property type="match status" value="1"/>
</dbReference>
<dbReference type="PANTHER" id="PTHR10083">
    <property type="entry name" value="KUNITZ-TYPE PROTEASE INHIBITOR-RELATED"/>
    <property type="match status" value="1"/>
</dbReference>
<dbReference type="Pfam" id="PF00014">
    <property type="entry name" value="Kunitz_BPTI"/>
    <property type="match status" value="1"/>
</dbReference>
<dbReference type="PRINTS" id="PR00759">
    <property type="entry name" value="BASICPTASE"/>
</dbReference>
<dbReference type="SMART" id="SM00131">
    <property type="entry name" value="KU"/>
    <property type="match status" value="1"/>
</dbReference>
<dbReference type="SUPFAM" id="SSF57362">
    <property type="entry name" value="BPTI-like"/>
    <property type="match status" value="1"/>
</dbReference>
<dbReference type="PROSITE" id="PS00280">
    <property type="entry name" value="BPTI_KUNITZ_1"/>
    <property type="match status" value="1"/>
</dbReference>
<dbReference type="PROSITE" id="PS50279">
    <property type="entry name" value="BPTI_KUNITZ_2"/>
    <property type="match status" value="1"/>
</dbReference>
<proteinExistence type="evidence at transcript level"/>
<reference key="1">
    <citation type="submission" date="2001-10" db="EMBL/GenBank/DDBJ databases">
        <title>Structural and functional genomics of Bungarus candidus.</title>
        <authorList>
            <person name="Tsai I.H."/>
            <person name="Wang Y.M."/>
            <person name="Hsu H.Y."/>
        </authorList>
    </citation>
    <scope>NUCLEOTIDE SEQUENCE [MRNA]</scope>
    <source>
        <tissue>Venom gland</tissue>
    </source>
</reference>